<accession>Q9SZ20</accession>
<name>PP339_ARATH</name>
<keyword id="KW-0025">Alternative splicing</keyword>
<keyword id="KW-1185">Reference proteome</keyword>
<keyword id="KW-0677">Repeat</keyword>
<feature type="chain" id="PRO_0000363456" description="Pentatricopeptide repeat-containing protein At4g26800">
    <location>
        <begin position="1"/>
        <end position="514"/>
    </location>
</feature>
<feature type="repeat" description="PPR 1">
    <location>
        <begin position="122"/>
        <end position="156"/>
    </location>
</feature>
<feature type="repeat" description="PPR 2">
    <location>
        <begin position="157"/>
        <end position="191"/>
    </location>
</feature>
<feature type="repeat" description="PPR 3">
    <location>
        <begin position="192"/>
        <end position="226"/>
    </location>
</feature>
<feature type="repeat" description="PPR 4">
    <location>
        <begin position="227"/>
        <end position="261"/>
    </location>
</feature>
<feature type="repeat" description="PPR 5">
    <location>
        <begin position="262"/>
        <end position="296"/>
    </location>
</feature>
<feature type="repeat" description="PPR 6">
    <location>
        <begin position="297"/>
        <end position="331"/>
    </location>
</feature>
<feature type="repeat" description="PPR 7">
    <location>
        <begin position="332"/>
        <end position="366"/>
    </location>
</feature>
<feature type="repeat" description="PPR 8">
    <location>
        <begin position="367"/>
        <end position="401"/>
    </location>
</feature>
<feature type="repeat" description="PPR 9">
    <location>
        <begin position="402"/>
        <end position="436"/>
    </location>
</feature>
<feature type="repeat" description="PPR 10">
    <location>
        <begin position="437"/>
        <end position="471"/>
    </location>
</feature>
<feature type="repeat" description="PPR 11">
    <location>
        <begin position="472"/>
        <end position="510"/>
    </location>
</feature>
<feature type="splice variant" id="VSP_036305" description="In isoform 2." evidence="1">
    <location>
        <begin position="1"/>
        <end position="145"/>
    </location>
</feature>
<feature type="splice variant" id="VSP_036306" description="In isoform 2." evidence="1">
    <original>LG</original>
    <variation>ML</variation>
    <location>
        <begin position="146"/>
        <end position="147"/>
    </location>
</feature>
<comment type="alternative products">
    <event type="alternative splicing"/>
    <isoform>
        <id>Q9SZ20-1</id>
        <name>1</name>
        <sequence type="displayed"/>
    </isoform>
    <isoform>
        <id>Q9SZ20-2</id>
        <name>2</name>
        <sequence type="described" ref="VSP_036305 VSP_036306"/>
    </isoform>
</comment>
<comment type="miscellaneous">
    <molecule>Isoform 1</molecule>
    <text>May be due to an intron retention.</text>
</comment>
<comment type="similarity">
    <text evidence="2">Belongs to the PPR family. P subfamily.</text>
</comment>
<comment type="sequence caution" evidence="2">
    <conflict type="miscellaneous discrepancy">
        <sequence resource="EMBL" id="BX838540"/>
    </conflict>
    <text>Sequencing errors.</text>
</comment>
<comment type="sequence caution" evidence="2">
    <conflict type="erroneous initiation">
        <sequence resource="EMBL-CDS" id="CAB36526"/>
    </conflict>
</comment>
<comment type="sequence caution" evidence="2">
    <conflict type="erroneous initiation">
        <sequence resource="EMBL-CDS" id="CAB79535"/>
    </conflict>
</comment>
<comment type="online information" name="Pentatricopeptide repeat proteins">
    <link uri="https://ppr.plantenergy.uwa.edu.au"/>
</comment>
<reference key="1">
    <citation type="journal article" date="1999" name="Nature">
        <title>Sequence and analysis of chromosome 4 of the plant Arabidopsis thaliana.</title>
        <authorList>
            <person name="Mayer K.F.X."/>
            <person name="Schueller C."/>
            <person name="Wambutt R."/>
            <person name="Murphy G."/>
            <person name="Volckaert G."/>
            <person name="Pohl T."/>
            <person name="Duesterhoeft A."/>
            <person name="Stiekema W."/>
            <person name="Entian K.-D."/>
            <person name="Terryn N."/>
            <person name="Harris B."/>
            <person name="Ansorge W."/>
            <person name="Brandt P."/>
            <person name="Grivell L.A."/>
            <person name="Rieger M."/>
            <person name="Weichselgartner M."/>
            <person name="de Simone V."/>
            <person name="Obermaier B."/>
            <person name="Mache R."/>
            <person name="Mueller M."/>
            <person name="Kreis M."/>
            <person name="Delseny M."/>
            <person name="Puigdomenech P."/>
            <person name="Watson M."/>
            <person name="Schmidtheini T."/>
            <person name="Reichert B."/>
            <person name="Portetelle D."/>
            <person name="Perez-Alonso M."/>
            <person name="Boutry M."/>
            <person name="Bancroft I."/>
            <person name="Vos P."/>
            <person name="Hoheisel J."/>
            <person name="Zimmermann W."/>
            <person name="Wedler H."/>
            <person name="Ridley P."/>
            <person name="Langham S.-A."/>
            <person name="McCullagh B."/>
            <person name="Bilham L."/>
            <person name="Robben J."/>
            <person name="van der Schueren J."/>
            <person name="Grymonprez B."/>
            <person name="Chuang Y.-J."/>
            <person name="Vandenbussche F."/>
            <person name="Braeken M."/>
            <person name="Weltjens I."/>
            <person name="Voet M."/>
            <person name="Bastiaens I."/>
            <person name="Aert R."/>
            <person name="Defoor E."/>
            <person name="Weitzenegger T."/>
            <person name="Bothe G."/>
            <person name="Ramsperger U."/>
            <person name="Hilbert H."/>
            <person name="Braun M."/>
            <person name="Holzer E."/>
            <person name="Brandt A."/>
            <person name="Peters S."/>
            <person name="van Staveren M."/>
            <person name="Dirkse W."/>
            <person name="Mooijman P."/>
            <person name="Klein Lankhorst R."/>
            <person name="Rose M."/>
            <person name="Hauf J."/>
            <person name="Koetter P."/>
            <person name="Berneiser S."/>
            <person name="Hempel S."/>
            <person name="Feldpausch M."/>
            <person name="Lamberth S."/>
            <person name="Van den Daele H."/>
            <person name="De Keyser A."/>
            <person name="Buysshaert C."/>
            <person name="Gielen J."/>
            <person name="Villarroel R."/>
            <person name="De Clercq R."/>
            <person name="van Montagu M."/>
            <person name="Rogers J."/>
            <person name="Cronin A."/>
            <person name="Quail M.A."/>
            <person name="Bray-Allen S."/>
            <person name="Clark L."/>
            <person name="Doggett J."/>
            <person name="Hall S."/>
            <person name="Kay M."/>
            <person name="Lennard N."/>
            <person name="McLay K."/>
            <person name="Mayes R."/>
            <person name="Pettett A."/>
            <person name="Rajandream M.A."/>
            <person name="Lyne M."/>
            <person name="Benes V."/>
            <person name="Rechmann S."/>
            <person name="Borkova D."/>
            <person name="Bloecker H."/>
            <person name="Scharfe M."/>
            <person name="Grimm M."/>
            <person name="Loehnert T.-H."/>
            <person name="Dose S."/>
            <person name="de Haan M."/>
            <person name="Maarse A.C."/>
            <person name="Schaefer M."/>
            <person name="Mueller-Auer S."/>
            <person name="Gabel C."/>
            <person name="Fuchs M."/>
            <person name="Fartmann B."/>
            <person name="Granderath K."/>
            <person name="Dauner D."/>
            <person name="Herzl A."/>
            <person name="Neumann S."/>
            <person name="Argiriou A."/>
            <person name="Vitale D."/>
            <person name="Liguori R."/>
            <person name="Piravandi E."/>
            <person name="Massenet O."/>
            <person name="Quigley F."/>
            <person name="Clabauld G."/>
            <person name="Muendlein A."/>
            <person name="Felber R."/>
            <person name="Schnabl S."/>
            <person name="Hiller R."/>
            <person name="Schmidt W."/>
            <person name="Lecharny A."/>
            <person name="Aubourg S."/>
            <person name="Chefdor F."/>
            <person name="Cooke R."/>
            <person name="Berger C."/>
            <person name="Monfort A."/>
            <person name="Casacuberta E."/>
            <person name="Gibbons T."/>
            <person name="Weber N."/>
            <person name="Vandenbol M."/>
            <person name="Bargues M."/>
            <person name="Terol J."/>
            <person name="Torres A."/>
            <person name="Perez-Perez A."/>
            <person name="Purnelle B."/>
            <person name="Bent E."/>
            <person name="Johnson S."/>
            <person name="Tacon D."/>
            <person name="Jesse T."/>
            <person name="Heijnen L."/>
            <person name="Schwarz S."/>
            <person name="Scholler P."/>
            <person name="Heber S."/>
            <person name="Francs P."/>
            <person name="Bielke C."/>
            <person name="Frishman D."/>
            <person name="Haase D."/>
            <person name="Lemcke K."/>
            <person name="Mewes H.-W."/>
            <person name="Stocker S."/>
            <person name="Zaccaria P."/>
            <person name="Bevan M."/>
            <person name="Wilson R.K."/>
            <person name="de la Bastide M."/>
            <person name="Habermann K."/>
            <person name="Parnell L."/>
            <person name="Dedhia N."/>
            <person name="Gnoj L."/>
            <person name="Schutz K."/>
            <person name="Huang E."/>
            <person name="Spiegel L."/>
            <person name="Sekhon M."/>
            <person name="Murray J."/>
            <person name="Sheet P."/>
            <person name="Cordes M."/>
            <person name="Abu-Threideh J."/>
            <person name="Stoneking T."/>
            <person name="Kalicki J."/>
            <person name="Graves T."/>
            <person name="Harmon G."/>
            <person name="Edwards J."/>
            <person name="Latreille P."/>
            <person name="Courtney L."/>
            <person name="Cloud J."/>
            <person name="Abbott A."/>
            <person name="Scott K."/>
            <person name="Johnson D."/>
            <person name="Minx P."/>
            <person name="Bentley D."/>
            <person name="Fulton B."/>
            <person name="Miller N."/>
            <person name="Greco T."/>
            <person name="Kemp K."/>
            <person name="Kramer J."/>
            <person name="Fulton L."/>
            <person name="Mardis E."/>
            <person name="Dante M."/>
            <person name="Pepin K."/>
            <person name="Hillier L.W."/>
            <person name="Nelson J."/>
            <person name="Spieth J."/>
            <person name="Ryan E."/>
            <person name="Andrews S."/>
            <person name="Geisel C."/>
            <person name="Layman D."/>
            <person name="Du H."/>
            <person name="Ali J."/>
            <person name="Berghoff A."/>
            <person name="Jones K."/>
            <person name="Drone K."/>
            <person name="Cotton M."/>
            <person name="Joshu C."/>
            <person name="Antonoiu B."/>
            <person name="Zidanic M."/>
            <person name="Strong C."/>
            <person name="Sun H."/>
            <person name="Lamar B."/>
            <person name="Yordan C."/>
            <person name="Ma P."/>
            <person name="Zhong J."/>
            <person name="Preston R."/>
            <person name="Vil D."/>
            <person name="Shekher M."/>
            <person name="Matero A."/>
            <person name="Shah R."/>
            <person name="Swaby I.K."/>
            <person name="O'Shaughnessy A."/>
            <person name="Rodriguez M."/>
            <person name="Hoffman J."/>
            <person name="Till S."/>
            <person name="Granat S."/>
            <person name="Shohdy N."/>
            <person name="Hasegawa A."/>
            <person name="Hameed A."/>
            <person name="Lodhi M."/>
            <person name="Johnson A."/>
            <person name="Chen E."/>
            <person name="Marra M.A."/>
            <person name="Martienssen R."/>
            <person name="McCombie W.R."/>
        </authorList>
    </citation>
    <scope>NUCLEOTIDE SEQUENCE [LARGE SCALE GENOMIC DNA]</scope>
    <source>
        <strain>cv. Columbia</strain>
    </source>
</reference>
<reference key="2">
    <citation type="journal article" date="2017" name="Plant J.">
        <title>Araport11: a complete reannotation of the Arabidopsis thaliana reference genome.</title>
        <authorList>
            <person name="Cheng C.Y."/>
            <person name="Krishnakumar V."/>
            <person name="Chan A.P."/>
            <person name="Thibaud-Nissen F."/>
            <person name="Schobel S."/>
            <person name="Town C.D."/>
        </authorList>
    </citation>
    <scope>GENOME REANNOTATION</scope>
    <source>
        <strain>cv. Columbia</strain>
    </source>
</reference>
<reference key="3">
    <citation type="journal article" date="2004" name="Genome Res.">
        <title>Whole genome sequence comparisons and 'full-length' cDNA sequences: a combined approach to evaluate and improve Arabidopsis genome annotation.</title>
        <authorList>
            <person name="Castelli V."/>
            <person name="Aury J.-M."/>
            <person name="Jaillon O."/>
            <person name="Wincker P."/>
            <person name="Clepet C."/>
            <person name="Menard M."/>
            <person name="Cruaud C."/>
            <person name="Quetier F."/>
            <person name="Scarpelli C."/>
            <person name="Schaechter V."/>
            <person name="Temple G."/>
            <person name="Caboche M."/>
            <person name="Weissenbach J."/>
            <person name="Salanoubat M."/>
        </authorList>
    </citation>
    <scope>NUCLEOTIDE SEQUENCE [LARGE SCALE MRNA] (ISOFORMS 1 AND 2)</scope>
    <source>
        <strain>cv. Columbia</strain>
    </source>
</reference>
<reference key="4">
    <citation type="journal article" date="2004" name="Plant Cell">
        <title>Genome-wide analysis of Arabidopsis pentatricopeptide repeat proteins reveals their essential role in organelle biogenesis.</title>
        <authorList>
            <person name="Lurin C."/>
            <person name="Andres C."/>
            <person name="Aubourg S."/>
            <person name="Bellaoui M."/>
            <person name="Bitton F."/>
            <person name="Bruyere C."/>
            <person name="Caboche M."/>
            <person name="Debast C."/>
            <person name="Gualberto J."/>
            <person name="Hoffmann B."/>
            <person name="Lecharny A."/>
            <person name="Le Ret M."/>
            <person name="Martin-Magniette M.-L."/>
            <person name="Mireau H."/>
            <person name="Peeters N."/>
            <person name="Renou J.-P."/>
            <person name="Szurek B."/>
            <person name="Taconnat L."/>
            <person name="Small I."/>
        </authorList>
    </citation>
    <scope>GENE FAMILY</scope>
</reference>
<sequence length="514" mass="57841">MRWSIATAIASTAKGFLHLHHHFLKNSNPGIVLSPSLRFRFWVRAFSGTTIDYREVLRSGLHNIKFDDAFHLFVLMAYSYPLPSIVEFNKVLTAIAKMQMYDVVINLWKRIENAEGIEISPDLYTCNILVNCFCRCFQPSSALSYLGKMMKLGIEPDIVTASSLVNGFCLSNSIKDAVYVAGQMEKMGIKRDVVVDTILIDTLCKNRLVVPALEVLKRMKDRGISPNVVTYSSLITGLCKSGRLADAERRLHEMDSKKINPNVITFSALIDAYAKRGKLSKVDSVYKMMIQMSIDPNVFTYSSLIYGLCMHNRVDEAIKMLDLMISKGCTPNVVTYSTLANGFFKSSRVDDGIKLLDDMPQRGVAANTVSCNTLIKGYFQAGKIDLALGVFGYMTSNGLIPNIRSYNIVLAGLFANGEVEKALSRFEHMQKTRNDLDIITYTIMIHGMCKACMVKEAYDLFYKLKFKRVEPDFKAYTIMIAELNRAGMRTEADALNRFYQKHVRQNESAPAEVS</sequence>
<dbReference type="EMBL" id="AL035440">
    <property type="protein sequence ID" value="CAB36526.1"/>
    <property type="status" value="ALT_INIT"/>
    <property type="molecule type" value="Genomic_DNA"/>
</dbReference>
<dbReference type="EMBL" id="AL161565">
    <property type="protein sequence ID" value="CAB79535.1"/>
    <property type="status" value="ALT_INIT"/>
    <property type="molecule type" value="Genomic_DNA"/>
</dbReference>
<dbReference type="EMBL" id="CP002687">
    <property type="protein sequence ID" value="AEE85254.1"/>
    <property type="molecule type" value="Genomic_DNA"/>
</dbReference>
<dbReference type="EMBL" id="CP002687">
    <property type="protein sequence ID" value="ANM67332.1"/>
    <property type="molecule type" value="Genomic_DNA"/>
</dbReference>
<dbReference type="EMBL" id="BX838540">
    <property type="status" value="NOT_ANNOTATED_CDS"/>
    <property type="molecule type" value="mRNA"/>
</dbReference>
<dbReference type="EMBL" id="BX828174">
    <property type="status" value="NOT_ANNOTATED_CDS"/>
    <property type="molecule type" value="mRNA"/>
</dbReference>
<dbReference type="PIR" id="T04803">
    <property type="entry name" value="T04803"/>
</dbReference>
<dbReference type="RefSeq" id="NP_001329165.1">
    <property type="nucleotide sequence ID" value="NM_001341831.1"/>
</dbReference>
<dbReference type="RefSeq" id="NP_001329166.1">
    <molecule id="Q9SZ20-1"/>
    <property type="nucleotide sequence ID" value="NM_001341830.1"/>
</dbReference>
<dbReference type="RefSeq" id="NP_194410.2">
    <molecule id="Q9SZ20-2"/>
    <property type="nucleotide sequence ID" value="NM_118814.3"/>
</dbReference>
<dbReference type="SMR" id="Q9SZ20"/>
<dbReference type="FunCoup" id="Q9SZ20">
    <property type="interactions" value="229"/>
</dbReference>
<dbReference type="iPTMnet" id="Q9SZ20"/>
<dbReference type="PaxDb" id="3702-AT4G26800.1"/>
<dbReference type="ProteomicsDB" id="249239">
    <molecule id="Q9SZ20-1"/>
</dbReference>
<dbReference type="EnsemblPlants" id="AT4G26800.1">
    <molecule id="Q9SZ20-2"/>
    <property type="protein sequence ID" value="AT4G26800.1"/>
    <property type="gene ID" value="AT4G26800"/>
</dbReference>
<dbReference type="EnsemblPlants" id="AT4G26800.2">
    <molecule id="Q9SZ20-1"/>
    <property type="protein sequence ID" value="AT4G26800.2"/>
    <property type="gene ID" value="AT4G26800"/>
</dbReference>
<dbReference type="GeneID" id="828787"/>
<dbReference type="Gramene" id="AT4G26800.1">
    <molecule id="Q9SZ20-2"/>
    <property type="protein sequence ID" value="AT4G26800.1"/>
    <property type="gene ID" value="AT4G26800"/>
</dbReference>
<dbReference type="Gramene" id="AT4G26800.2">
    <molecule id="Q9SZ20-1"/>
    <property type="protein sequence ID" value="AT4G26800.2"/>
    <property type="gene ID" value="AT4G26800"/>
</dbReference>
<dbReference type="KEGG" id="ath:AT4G26800"/>
<dbReference type="Araport" id="AT4G26800"/>
<dbReference type="TAIR" id="AT4G26800"/>
<dbReference type="eggNOG" id="KOG4197">
    <property type="taxonomic scope" value="Eukaryota"/>
</dbReference>
<dbReference type="HOGENOM" id="CLU_002706_49_0_1"/>
<dbReference type="InParanoid" id="Q9SZ20"/>
<dbReference type="OrthoDB" id="185373at2759"/>
<dbReference type="PhylomeDB" id="Q9SZ20"/>
<dbReference type="PRO" id="PR:Q9SZ20"/>
<dbReference type="Proteomes" id="UP000006548">
    <property type="component" value="Chromosome 4"/>
</dbReference>
<dbReference type="ExpressionAtlas" id="Q9SZ20">
    <property type="expression patterns" value="baseline and differential"/>
</dbReference>
<dbReference type="Gene3D" id="1.25.40.10">
    <property type="entry name" value="Tetratricopeptide repeat domain"/>
    <property type="match status" value="5"/>
</dbReference>
<dbReference type="InterPro" id="IPR002885">
    <property type="entry name" value="Pentatricopeptide_rpt"/>
</dbReference>
<dbReference type="InterPro" id="IPR050667">
    <property type="entry name" value="PPR-containing_protein"/>
</dbReference>
<dbReference type="InterPro" id="IPR011990">
    <property type="entry name" value="TPR-like_helical_dom_sf"/>
</dbReference>
<dbReference type="NCBIfam" id="TIGR00756">
    <property type="entry name" value="PPR"/>
    <property type="match status" value="10"/>
</dbReference>
<dbReference type="PANTHER" id="PTHR47939">
    <property type="entry name" value="MEMBRANE-ASSOCIATED SALT-INDUCIBLE PROTEIN-LIKE"/>
    <property type="match status" value="1"/>
</dbReference>
<dbReference type="PANTHER" id="PTHR47939:SF13">
    <property type="entry name" value="OS03G0201400 PROTEIN"/>
    <property type="match status" value="1"/>
</dbReference>
<dbReference type="Pfam" id="PF01535">
    <property type="entry name" value="PPR"/>
    <property type="match status" value="1"/>
</dbReference>
<dbReference type="Pfam" id="PF12854">
    <property type="entry name" value="PPR_1"/>
    <property type="match status" value="1"/>
</dbReference>
<dbReference type="Pfam" id="PF13041">
    <property type="entry name" value="PPR_2"/>
    <property type="match status" value="4"/>
</dbReference>
<dbReference type="PROSITE" id="PS51375">
    <property type="entry name" value="PPR"/>
    <property type="match status" value="12"/>
</dbReference>
<organism>
    <name type="scientific">Arabidopsis thaliana</name>
    <name type="common">Mouse-ear cress</name>
    <dbReference type="NCBI Taxonomy" id="3702"/>
    <lineage>
        <taxon>Eukaryota</taxon>
        <taxon>Viridiplantae</taxon>
        <taxon>Streptophyta</taxon>
        <taxon>Embryophyta</taxon>
        <taxon>Tracheophyta</taxon>
        <taxon>Spermatophyta</taxon>
        <taxon>Magnoliopsida</taxon>
        <taxon>eudicotyledons</taxon>
        <taxon>Gunneridae</taxon>
        <taxon>Pentapetalae</taxon>
        <taxon>rosids</taxon>
        <taxon>malvids</taxon>
        <taxon>Brassicales</taxon>
        <taxon>Brassicaceae</taxon>
        <taxon>Camelineae</taxon>
        <taxon>Arabidopsis</taxon>
    </lineage>
</organism>
<proteinExistence type="evidence at transcript level"/>
<protein>
    <recommendedName>
        <fullName>Pentatricopeptide repeat-containing protein At4g26800</fullName>
    </recommendedName>
</protein>
<gene>
    <name type="ordered locus">At4g26800</name>
    <name type="ORF">F10M23.140</name>
</gene>
<evidence type="ECO:0000303" key="1">
    <source>
    </source>
</evidence>
<evidence type="ECO:0000305" key="2"/>